<name>RL5_EHRCJ</name>
<protein>
    <recommendedName>
        <fullName evidence="1">Large ribosomal subunit protein uL5</fullName>
    </recommendedName>
    <alternativeName>
        <fullName evidence="2">50S ribosomal protein L5</fullName>
    </alternativeName>
</protein>
<sequence length="177" mass="19774">MLKDLYKSHIVPSLKTKLGYSNVMQVPKIVKVCLNIGLGIRGSDSKVMNSCVRDLALIAGQKPVATYAKKSIAGFKIRKGFPIGCKVTLRNNKMYEFLERLIHVVLPREQDFKGLSVNQFDGCGNLSIGIKEHISFLEIDYDKIDKILGLDINIVTNAVNNNDAKLLLMEFGFPFIN</sequence>
<proteinExistence type="inferred from homology"/>
<accession>Q3YRM1</accession>
<feature type="chain" id="PRO_0000242996" description="Large ribosomal subunit protein uL5">
    <location>
        <begin position="1"/>
        <end position="177"/>
    </location>
</feature>
<organism>
    <name type="scientific">Ehrlichia canis (strain Jake)</name>
    <dbReference type="NCBI Taxonomy" id="269484"/>
    <lineage>
        <taxon>Bacteria</taxon>
        <taxon>Pseudomonadati</taxon>
        <taxon>Pseudomonadota</taxon>
        <taxon>Alphaproteobacteria</taxon>
        <taxon>Rickettsiales</taxon>
        <taxon>Anaplasmataceae</taxon>
        <taxon>Ehrlichia</taxon>
    </lineage>
</organism>
<comment type="function">
    <text evidence="1">This is one of the proteins that bind and probably mediate the attachment of the 5S RNA into the large ribosomal subunit, where it forms part of the central protuberance. In the 70S ribosome it contacts protein S13 of the 30S subunit (bridge B1b), connecting the 2 subunits; this bridge is implicated in subunit movement. Contacts the P site tRNA; the 5S rRNA and some of its associated proteins might help stabilize positioning of ribosome-bound tRNAs.</text>
</comment>
<comment type="subunit">
    <text evidence="1">Part of the 50S ribosomal subunit; part of the 5S rRNA/L5/L18/L25 subcomplex. Contacts the 5S rRNA and the P site tRNA. Forms a bridge to the 30S subunit in the 70S ribosome.</text>
</comment>
<comment type="similarity">
    <text evidence="1">Belongs to the universal ribosomal protein uL5 family.</text>
</comment>
<evidence type="ECO:0000255" key="1">
    <source>
        <dbReference type="HAMAP-Rule" id="MF_01333"/>
    </source>
</evidence>
<evidence type="ECO:0000305" key="2"/>
<gene>
    <name evidence="1" type="primary">rplE</name>
    <name type="ordered locus">Ecaj_0600</name>
</gene>
<reference key="1">
    <citation type="journal article" date="2006" name="J. Bacteriol.">
        <title>The genome of the obligately intracellular bacterium Ehrlichia canis reveals themes of complex membrane structure and immune evasion strategies.</title>
        <authorList>
            <person name="Mavromatis K."/>
            <person name="Doyle C.K."/>
            <person name="Lykidis A."/>
            <person name="Ivanova N."/>
            <person name="Francino M.P."/>
            <person name="Chain P."/>
            <person name="Shin M."/>
            <person name="Malfatti S."/>
            <person name="Larimer F."/>
            <person name="Copeland A."/>
            <person name="Detter J.C."/>
            <person name="Land M."/>
            <person name="Richardson P.M."/>
            <person name="Yu X.J."/>
            <person name="Walker D.H."/>
            <person name="McBride J.W."/>
            <person name="Kyrpides N.C."/>
        </authorList>
    </citation>
    <scope>NUCLEOTIDE SEQUENCE [LARGE SCALE GENOMIC DNA]</scope>
    <source>
        <strain>Jake</strain>
    </source>
</reference>
<keyword id="KW-0687">Ribonucleoprotein</keyword>
<keyword id="KW-0689">Ribosomal protein</keyword>
<keyword id="KW-0694">RNA-binding</keyword>
<keyword id="KW-0699">rRNA-binding</keyword>
<keyword id="KW-0820">tRNA-binding</keyword>
<dbReference type="EMBL" id="CP000107">
    <property type="protein sequence ID" value="AAZ68634.1"/>
    <property type="molecule type" value="Genomic_DNA"/>
</dbReference>
<dbReference type="RefSeq" id="WP_011304712.1">
    <property type="nucleotide sequence ID" value="NC_007354.1"/>
</dbReference>
<dbReference type="SMR" id="Q3YRM1"/>
<dbReference type="FunCoup" id="Q3YRM1">
    <property type="interactions" value="341"/>
</dbReference>
<dbReference type="STRING" id="269484.Ecaj_0600"/>
<dbReference type="KEGG" id="ecn:Ecaj_0600"/>
<dbReference type="eggNOG" id="COG0094">
    <property type="taxonomic scope" value="Bacteria"/>
</dbReference>
<dbReference type="HOGENOM" id="CLU_061015_2_1_5"/>
<dbReference type="InParanoid" id="Q3YRM1"/>
<dbReference type="Proteomes" id="UP000000435">
    <property type="component" value="Chromosome"/>
</dbReference>
<dbReference type="GO" id="GO:1990904">
    <property type="term" value="C:ribonucleoprotein complex"/>
    <property type="evidence" value="ECO:0007669"/>
    <property type="project" value="UniProtKB-KW"/>
</dbReference>
<dbReference type="GO" id="GO:0005840">
    <property type="term" value="C:ribosome"/>
    <property type="evidence" value="ECO:0007669"/>
    <property type="project" value="UniProtKB-KW"/>
</dbReference>
<dbReference type="GO" id="GO:0019843">
    <property type="term" value="F:rRNA binding"/>
    <property type="evidence" value="ECO:0007669"/>
    <property type="project" value="UniProtKB-UniRule"/>
</dbReference>
<dbReference type="GO" id="GO:0003735">
    <property type="term" value="F:structural constituent of ribosome"/>
    <property type="evidence" value="ECO:0007669"/>
    <property type="project" value="InterPro"/>
</dbReference>
<dbReference type="GO" id="GO:0000049">
    <property type="term" value="F:tRNA binding"/>
    <property type="evidence" value="ECO:0007669"/>
    <property type="project" value="UniProtKB-UniRule"/>
</dbReference>
<dbReference type="GO" id="GO:0006412">
    <property type="term" value="P:translation"/>
    <property type="evidence" value="ECO:0007669"/>
    <property type="project" value="UniProtKB-UniRule"/>
</dbReference>
<dbReference type="FunFam" id="3.30.1440.10:FF:000001">
    <property type="entry name" value="50S ribosomal protein L5"/>
    <property type="match status" value="1"/>
</dbReference>
<dbReference type="Gene3D" id="3.30.1440.10">
    <property type="match status" value="1"/>
</dbReference>
<dbReference type="HAMAP" id="MF_01333_B">
    <property type="entry name" value="Ribosomal_uL5_B"/>
    <property type="match status" value="1"/>
</dbReference>
<dbReference type="InterPro" id="IPR002132">
    <property type="entry name" value="Ribosomal_uL5"/>
</dbReference>
<dbReference type="InterPro" id="IPR020930">
    <property type="entry name" value="Ribosomal_uL5_bac-type"/>
</dbReference>
<dbReference type="InterPro" id="IPR031309">
    <property type="entry name" value="Ribosomal_uL5_C"/>
</dbReference>
<dbReference type="InterPro" id="IPR020929">
    <property type="entry name" value="Ribosomal_uL5_CS"/>
</dbReference>
<dbReference type="InterPro" id="IPR022803">
    <property type="entry name" value="Ribosomal_uL5_dom_sf"/>
</dbReference>
<dbReference type="InterPro" id="IPR031310">
    <property type="entry name" value="Ribosomal_uL5_N"/>
</dbReference>
<dbReference type="NCBIfam" id="NF000585">
    <property type="entry name" value="PRK00010.1"/>
    <property type="match status" value="1"/>
</dbReference>
<dbReference type="PANTHER" id="PTHR11994">
    <property type="entry name" value="60S RIBOSOMAL PROTEIN L11-RELATED"/>
    <property type="match status" value="1"/>
</dbReference>
<dbReference type="Pfam" id="PF00281">
    <property type="entry name" value="Ribosomal_L5"/>
    <property type="match status" value="1"/>
</dbReference>
<dbReference type="Pfam" id="PF00673">
    <property type="entry name" value="Ribosomal_L5_C"/>
    <property type="match status" value="1"/>
</dbReference>
<dbReference type="PIRSF" id="PIRSF002161">
    <property type="entry name" value="Ribosomal_L5"/>
    <property type="match status" value="1"/>
</dbReference>
<dbReference type="SUPFAM" id="SSF55282">
    <property type="entry name" value="RL5-like"/>
    <property type="match status" value="1"/>
</dbReference>
<dbReference type="PROSITE" id="PS00358">
    <property type="entry name" value="RIBOSOMAL_L5"/>
    <property type="match status" value="1"/>
</dbReference>